<proteinExistence type="inferred from homology"/>
<dbReference type="EC" id="2.4.2.7" evidence="1"/>
<dbReference type="EMBL" id="CP000123">
    <property type="protein sequence ID" value="ABC01255.1"/>
    <property type="molecule type" value="Genomic_DNA"/>
</dbReference>
<dbReference type="RefSeq" id="WP_011387368.1">
    <property type="nucleotide sequence ID" value="NC_007633.1"/>
</dbReference>
<dbReference type="SMR" id="Q2SRZ3"/>
<dbReference type="GeneID" id="23778547"/>
<dbReference type="KEGG" id="mcp:MCAP_0497"/>
<dbReference type="HOGENOM" id="CLU_063339_3_0_14"/>
<dbReference type="PhylomeDB" id="Q2SRZ3"/>
<dbReference type="UniPathway" id="UPA00588">
    <property type="reaction ID" value="UER00646"/>
</dbReference>
<dbReference type="Proteomes" id="UP000001928">
    <property type="component" value="Chromosome"/>
</dbReference>
<dbReference type="GO" id="GO:0005737">
    <property type="term" value="C:cytoplasm"/>
    <property type="evidence" value="ECO:0007669"/>
    <property type="project" value="UniProtKB-SubCell"/>
</dbReference>
<dbReference type="GO" id="GO:0002055">
    <property type="term" value="F:adenine binding"/>
    <property type="evidence" value="ECO:0007669"/>
    <property type="project" value="TreeGrafter"/>
</dbReference>
<dbReference type="GO" id="GO:0003999">
    <property type="term" value="F:adenine phosphoribosyltransferase activity"/>
    <property type="evidence" value="ECO:0007669"/>
    <property type="project" value="UniProtKB-UniRule"/>
</dbReference>
<dbReference type="GO" id="GO:0016208">
    <property type="term" value="F:AMP binding"/>
    <property type="evidence" value="ECO:0007669"/>
    <property type="project" value="TreeGrafter"/>
</dbReference>
<dbReference type="GO" id="GO:0006168">
    <property type="term" value="P:adenine salvage"/>
    <property type="evidence" value="ECO:0007669"/>
    <property type="project" value="InterPro"/>
</dbReference>
<dbReference type="GO" id="GO:0044209">
    <property type="term" value="P:AMP salvage"/>
    <property type="evidence" value="ECO:0007669"/>
    <property type="project" value="UniProtKB-UniRule"/>
</dbReference>
<dbReference type="GO" id="GO:0006166">
    <property type="term" value="P:purine ribonucleoside salvage"/>
    <property type="evidence" value="ECO:0007669"/>
    <property type="project" value="UniProtKB-KW"/>
</dbReference>
<dbReference type="CDD" id="cd06223">
    <property type="entry name" value="PRTases_typeI"/>
    <property type="match status" value="1"/>
</dbReference>
<dbReference type="FunFam" id="3.40.50.2020:FF:000021">
    <property type="entry name" value="Adenine phosphoribosyltransferase"/>
    <property type="match status" value="1"/>
</dbReference>
<dbReference type="Gene3D" id="3.40.50.2020">
    <property type="match status" value="1"/>
</dbReference>
<dbReference type="HAMAP" id="MF_00004">
    <property type="entry name" value="Aden_phosphoribosyltr"/>
    <property type="match status" value="1"/>
</dbReference>
<dbReference type="InterPro" id="IPR005764">
    <property type="entry name" value="Ade_phspho_trans"/>
</dbReference>
<dbReference type="InterPro" id="IPR000836">
    <property type="entry name" value="PRibTrfase_dom"/>
</dbReference>
<dbReference type="InterPro" id="IPR029057">
    <property type="entry name" value="PRTase-like"/>
</dbReference>
<dbReference type="InterPro" id="IPR050054">
    <property type="entry name" value="UPRTase/APRTase"/>
</dbReference>
<dbReference type="NCBIfam" id="TIGR01090">
    <property type="entry name" value="apt"/>
    <property type="match status" value="1"/>
</dbReference>
<dbReference type="NCBIfam" id="NF002636">
    <property type="entry name" value="PRK02304.1-5"/>
    <property type="match status" value="1"/>
</dbReference>
<dbReference type="PANTHER" id="PTHR32315">
    <property type="entry name" value="ADENINE PHOSPHORIBOSYLTRANSFERASE"/>
    <property type="match status" value="1"/>
</dbReference>
<dbReference type="PANTHER" id="PTHR32315:SF3">
    <property type="entry name" value="ADENINE PHOSPHORIBOSYLTRANSFERASE"/>
    <property type="match status" value="1"/>
</dbReference>
<dbReference type="Pfam" id="PF00156">
    <property type="entry name" value="Pribosyltran"/>
    <property type="match status" value="1"/>
</dbReference>
<dbReference type="SUPFAM" id="SSF53271">
    <property type="entry name" value="PRTase-like"/>
    <property type="match status" value="1"/>
</dbReference>
<dbReference type="PROSITE" id="PS00103">
    <property type="entry name" value="PUR_PYR_PR_TRANSFER"/>
    <property type="match status" value="1"/>
</dbReference>
<gene>
    <name evidence="1" type="primary">apt</name>
    <name type="ordered locus">MCAP_0497</name>
</gene>
<organism>
    <name type="scientific">Mycoplasma capricolum subsp. capricolum (strain California kid / ATCC 27343 / NCTC 10154)</name>
    <dbReference type="NCBI Taxonomy" id="340047"/>
    <lineage>
        <taxon>Bacteria</taxon>
        <taxon>Bacillati</taxon>
        <taxon>Mycoplasmatota</taxon>
        <taxon>Mollicutes</taxon>
        <taxon>Mycoplasmataceae</taxon>
        <taxon>Mycoplasma</taxon>
    </lineage>
</organism>
<keyword id="KW-0963">Cytoplasm</keyword>
<keyword id="KW-0328">Glycosyltransferase</keyword>
<keyword id="KW-0660">Purine salvage</keyword>
<keyword id="KW-0808">Transferase</keyword>
<name>APT_MYCCT</name>
<accession>Q2SRZ3</accession>
<reference key="1">
    <citation type="submission" date="2005-09" db="EMBL/GenBank/DDBJ databases">
        <authorList>
            <person name="Glass J.I."/>
            <person name="Lartigue C."/>
            <person name="Pfannkoch C."/>
            <person name="Baden-Tillson H."/>
            <person name="Smith H.O."/>
            <person name="Venter J.C."/>
            <person name="Roske K."/>
            <person name="Wise K.S."/>
            <person name="Calcutt M.J."/>
            <person name="Nelson W.C."/>
            <person name="Nierman W.C."/>
        </authorList>
    </citation>
    <scope>NUCLEOTIDE SEQUENCE [LARGE SCALE GENOMIC DNA]</scope>
    <source>
        <strain>California kid / ATCC 27343 / NCTC 10154</strain>
    </source>
</reference>
<feature type="chain" id="PRO_1000000308" description="Adenine phosphoribosyltransferase">
    <location>
        <begin position="1"/>
        <end position="170"/>
    </location>
</feature>
<evidence type="ECO:0000255" key="1">
    <source>
        <dbReference type="HAMAP-Rule" id="MF_00004"/>
    </source>
</evidence>
<sequence>MNLKEFVVDVKDFPQKGIIFKDITPLLNNKDAFKYMIDTIAEFVKQLDVDVIVAPEARGFLLASAVAYATNKRFVLVRKPNKLPREVYDVEYSLEYGTNHQQIHKEDLKPNDKVVVIDDVLATGGTMQAIIDLVKLSKAEVVGMSFLIDLTFLHKEDLFSEYQVQKLIKY</sequence>
<comment type="function">
    <text evidence="1">Catalyzes a salvage reaction resulting in the formation of AMP, that is energically less costly than de novo synthesis.</text>
</comment>
<comment type="catalytic activity">
    <reaction evidence="1">
        <text>AMP + diphosphate = 5-phospho-alpha-D-ribose 1-diphosphate + adenine</text>
        <dbReference type="Rhea" id="RHEA:16609"/>
        <dbReference type="ChEBI" id="CHEBI:16708"/>
        <dbReference type="ChEBI" id="CHEBI:33019"/>
        <dbReference type="ChEBI" id="CHEBI:58017"/>
        <dbReference type="ChEBI" id="CHEBI:456215"/>
        <dbReference type="EC" id="2.4.2.7"/>
    </reaction>
</comment>
<comment type="pathway">
    <text evidence="1">Purine metabolism; AMP biosynthesis via salvage pathway; AMP from adenine: step 1/1.</text>
</comment>
<comment type="subunit">
    <text evidence="1">Homodimer.</text>
</comment>
<comment type="subcellular location">
    <subcellularLocation>
        <location evidence="1">Cytoplasm</location>
    </subcellularLocation>
</comment>
<comment type="similarity">
    <text evidence="1">Belongs to the purine/pyrimidine phosphoribosyltransferase family.</text>
</comment>
<protein>
    <recommendedName>
        <fullName evidence="1">Adenine phosphoribosyltransferase</fullName>
        <shortName evidence="1">APRT</shortName>
        <ecNumber evidence="1">2.4.2.7</ecNumber>
    </recommendedName>
</protein>